<comment type="function">
    <text evidence="1">Removes the 2'-phosphate from RNA via an intermediate in which the phosphate is ADP-ribosylated by NAD followed by a presumed transesterification to release the RNA and generate ADP-ribose 1''-2''-cyclic phosphate (APPR&gt;P). May function as an ADP-ribosylase.</text>
</comment>
<comment type="similarity">
    <text evidence="1">Belongs to the KptA/TPT1 family.</text>
</comment>
<reference key="1">
    <citation type="journal article" date="2003" name="Proc. Natl. Acad. Sci. U.S.A.">
        <title>The complete genome sequence of the Arabidopsis and tomato pathogen Pseudomonas syringae pv. tomato DC3000.</title>
        <authorList>
            <person name="Buell C.R."/>
            <person name="Joardar V."/>
            <person name="Lindeberg M."/>
            <person name="Selengut J."/>
            <person name="Paulsen I.T."/>
            <person name="Gwinn M.L."/>
            <person name="Dodson R.J."/>
            <person name="DeBoy R.T."/>
            <person name="Durkin A.S."/>
            <person name="Kolonay J.F."/>
            <person name="Madupu R."/>
            <person name="Daugherty S.C."/>
            <person name="Brinkac L.M."/>
            <person name="Beanan M.J."/>
            <person name="Haft D.H."/>
            <person name="Nelson W.C."/>
            <person name="Davidsen T.M."/>
            <person name="Zafar N."/>
            <person name="Zhou L."/>
            <person name="Liu J."/>
            <person name="Yuan Q."/>
            <person name="Khouri H.M."/>
            <person name="Fedorova N.B."/>
            <person name="Tran B."/>
            <person name="Russell D."/>
            <person name="Berry K.J."/>
            <person name="Utterback T.R."/>
            <person name="Van Aken S.E."/>
            <person name="Feldblyum T.V."/>
            <person name="D'Ascenzo M."/>
            <person name="Deng W.-L."/>
            <person name="Ramos A.R."/>
            <person name="Alfano J.R."/>
            <person name="Cartinhour S."/>
            <person name="Chatterjee A.K."/>
            <person name="Delaney T.P."/>
            <person name="Lazarowitz S.G."/>
            <person name="Martin G.B."/>
            <person name="Schneider D.J."/>
            <person name="Tang X."/>
            <person name="Bender C.L."/>
            <person name="White O."/>
            <person name="Fraser C.M."/>
            <person name="Collmer A."/>
        </authorList>
    </citation>
    <scope>NUCLEOTIDE SEQUENCE [LARGE SCALE GENOMIC DNA]</scope>
    <source>
        <strain>ATCC BAA-871 / DC3000</strain>
    </source>
</reference>
<name>KPTA_PSESM</name>
<organism>
    <name type="scientific">Pseudomonas syringae pv. tomato (strain ATCC BAA-871 / DC3000)</name>
    <dbReference type="NCBI Taxonomy" id="223283"/>
    <lineage>
        <taxon>Bacteria</taxon>
        <taxon>Pseudomonadati</taxon>
        <taxon>Pseudomonadota</taxon>
        <taxon>Gammaproteobacteria</taxon>
        <taxon>Pseudomonadales</taxon>
        <taxon>Pseudomonadaceae</taxon>
        <taxon>Pseudomonas</taxon>
    </lineage>
</organism>
<dbReference type="EC" id="2.7.1.-" evidence="1"/>
<dbReference type="EMBL" id="AE016853">
    <property type="protein sequence ID" value="AAO58218.1"/>
    <property type="molecule type" value="Genomic_DNA"/>
</dbReference>
<dbReference type="RefSeq" id="NP_794523.1">
    <property type="nucleotide sequence ID" value="NC_004578.1"/>
</dbReference>
<dbReference type="RefSeq" id="WP_011105180.1">
    <property type="nucleotide sequence ID" value="NC_004578.1"/>
</dbReference>
<dbReference type="SMR" id="Q87VZ5"/>
<dbReference type="STRING" id="223283.PSPTO_4788"/>
<dbReference type="GeneID" id="1186471"/>
<dbReference type="KEGG" id="pst:PSPTO_4788"/>
<dbReference type="PATRIC" id="fig|223283.9.peg.4900"/>
<dbReference type="eggNOG" id="COG1859">
    <property type="taxonomic scope" value="Bacteria"/>
</dbReference>
<dbReference type="HOGENOM" id="CLU_052998_4_0_6"/>
<dbReference type="OrthoDB" id="4537997at2"/>
<dbReference type="PhylomeDB" id="Q87VZ5"/>
<dbReference type="Proteomes" id="UP000002515">
    <property type="component" value="Chromosome"/>
</dbReference>
<dbReference type="GO" id="GO:0003950">
    <property type="term" value="F:NAD+ poly-ADP-ribosyltransferase activity"/>
    <property type="evidence" value="ECO:0007669"/>
    <property type="project" value="InterPro"/>
</dbReference>
<dbReference type="GO" id="GO:0000215">
    <property type="term" value="F:tRNA 2'-phosphotransferase activity"/>
    <property type="evidence" value="ECO:0007669"/>
    <property type="project" value="TreeGrafter"/>
</dbReference>
<dbReference type="GO" id="GO:0006388">
    <property type="term" value="P:tRNA splicing, via endonucleolytic cleavage and ligation"/>
    <property type="evidence" value="ECO:0007669"/>
    <property type="project" value="UniProtKB-UniRule"/>
</dbReference>
<dbReference type="Gene3D" id="3.20.170.30">
    <property type="match status" value="1"/>
</dbReference>
<dbReference type="Gene3D" id="1.10.10.970">
    <property type="entry name" value="RNA 2'-phosphotransferase, Tpt1/KptA family, N-terminal domain"/>
    <property type="match status" value="1"/>
</dbReference>
<dbReference type="HAMAP" id="MF_00299">
    <property type="entry name" value="KptA"/>
    <property type="match status" value="1"/>
</dbReference>
<dbReference type="InterPro" id="IPR002745">
    <property type="entry name" value="Ptrans_KptA/Tpt1"/>
</dbReference>
<dbReference type="InterPro" id="IPR042081">
    <property type="entry name" value="RNA_2'-PTrans_C"/>
</dbReference>
<dbReference type="InterPro" id="IPR022928">
    <property type="entry name" value="RNA_2'-PTrans_KptA"/>
</dbReference>
<dbReference type="InterPro" id="IPR042080">
    <property type="entry name" value="RNA_2'-PTrans_N"/>
</dbReference>
<dbReference type="NCBIfam" id="NF002014">
    <property type="entry name" value="PRK00819.1-4"/>
    <property type="match status" value="1"/>
</dbReference>
<dbReference type="PANTHER" id="PTHR12684">
    <property type="entry name" value="PUTATIVE PHOSPHOTRANSFERASE"/>
    <property type="match status" value="1"/>
</dbReference>
<dbReference type="PANTHER" id="PTHR12684:SF2">
    <property type="entry name" value="TRNA 2'-PHOSPHOTRANSFERASE 1"/>
    <property type="match status" value="1"/>
</dbReference>
<dbReference type="Pfam" id="PF01885">
    <property type="entry name" value="PTS_2-RNA"/>
    <property type="match status" value="1"/>
</dbReference>
<dbReference type="SUPFAM" id="SSF56399">
    <property type="entry name" value="ADP-ribosylation"/>
    <property type="match status" value="1"/>
</dbReference>
<accession>Q87VZ5</accession>
<sequence length="187" mass="20892">MNKKQRDEISKLLSYVLRHAPESMGLTLDRDGWCEVDELVGKANANGHSFDRQALEEVVETNEKKRFTLSEDGQRIRAAQGHSTEQVQVQHIEKEPPAWLYHGTASRFMASIETQGLIAGSRHHVHLTEDPETALSVGKRYGQPVLLAVDAKGMFEAGVQFFQADNGVWLVEAVPIEWLTKVADTVS</sequence>
<protein>
    <recommendedName>
        <fullName evidence="1">Probable RNA 2'-phosphotransferase</fullName>
        <ecNumber evidence="1">2.7.1.-</ecNumber>
    </recommendedName>
</protein>
<feature type="chain" id="PRO_0000157482" description="Probable RNA 2'-phosphotransferase">
    <location>
        <begin position="1"/>
        <end position="187"/>
    </location>
</feature>
<proteinExistence type="inferred from homology"/>
<gene>
    <name evidence="1" type="primary">kptA</name>
    <name type="ordered locus">PSPTO_4788</name>
</gene>
<keyword id="KW-0520">NAD</keyword>
<keyword id="KW-1185">Reference proteome</keyword>
<keyword id="KW-0808">Transferase</keyword>
<evidence type="ECO:0000255" key="1">
    <source>
        <dbReference type="HAMAP-Rule" id="MF_00299"/>
    </source>
</evidence>